<feature type="chain" id="PRO_0000230862" description="Transcriptional repressor NrdR">
    <location>
        <begin position="1"/>
        <end position="152"/>
    </location>
</feature>
<feature type="domain" description="ATP-cone" evidence="1">
    <location>
        <begin position="48"/>
        <end position="138"/>
    </location>
</feature>
<feature type="zinc finger region" evidence="1">
    <location>
        <begin position="3"/>
        <end position="34"/>
    </location>
</feature>
<comment type="function">
    <text evidence="1">Negatively regulates transcription of bacterial ribonucleotide reductase nrd genes and operons by binding to NrdR-boxes.</text>
</comment>
<comment type="cofactor">
    <cofactor evidence="1">
        <name>Zn(2+)</name>
        <dbReference type="ChEBI" id="CHEBI:29105"/>
    </cofactor>
    <text evidence="1">Binds 1 zinc ion.</text>
</comment>
<comment type="similarity">
    <text evidence="1">Belongs to the NrdR family.</text>
</comment>
<reference key="1">
    <citation type="journal article" date="2005" name="Genome Res.">
        <title>The Chlamydophila abortus genome sequence reveals an array of variable proteins that contribute to interspecies variation.</title>
        <authorList>
            <person name="Thomson N.R."/>
            <person name="Yeats C."/>
            <person name="Bell K."/>
            <person name="Holden M.T.G."/>
            <person name="Bentley S.D."/>
            <person name="Livingstone M."/>
            <person name="Cerdeno-Tarraga A.-M."/>
            <person name="Harris B."/>
            <person name="Doggett J."/>
            <person name="Ormond D."/>
            <person name="Mungall K."/>
            <person name="Clarke K."/>
            <person name="Feltwell T."/>
            <person name="Hance Z."/>
            <person name="Sanders M."/>
            <person name="Quail M.A."/>
            <person name="Price C."/>
            <person name="Barrell B.G."/>
            <person name="Parkhill J."/>
            <person name="Longbottom D."/>
        </authorList>
    </citation>
    <scope>NUCLEOTIDE SEQUENCE [LARGE SCALE GENOMIC DNA]</scope>
    <source>
        <strain>DSM 27085 / S26/3</strain>
    </source>
</reference>
<proteinExistence type="inferred from homology"/>
<dbReference type="EMBL" id="CR848038">
    <property type="protein sequence ID" value="CAH63665.1"/>
    <property type="molecule type" value="Genomic_DNA"/>
</dbReference>
<dbReference type="RefSeq" id="WP_006342890.1">
    <property type="nucleotide sequence ID" value="NC_004552.2"/>
</dbReference>
<dbReference type="SMR" id="Q5L6Q6"/>
<dbReference type="GeneID" id="93024766"/>
<dbReference type="KEGG" id="cab:CAB207"/>
<dbReference type="eggNOG" id="COG1327">
    <property type="taxonomic scope" value="Bacteria"/>
</dbReference>
<dbReference type="HOGENOM" id="CLU_108412_0_0_0"/>
<dbReference type="OrthoDB" id="9807461at2"/>
<dbReference type="Proteomes" id="UP000001012">
    <property type="component" value="Chromosome"/>
</dbReference>
<dbReference type="GO" id="GO:0005524">
    <property type="term" value="F:ATP binding"/>
    <property type="evidence" value="ECO:0007669"/>
    <property type="project" value="UniProtKB-KW"/>
</dbReference>
<dbReference type="GO" id="GO:0003677">
    <property type="term" value="F:DNA binding"/>
    <property type="evidence" value="ECO:0007669"/>
    <property type="project" value="UniProtKB-KW"/>
</dbReference>
<dbReference type="GO" id="GO:0008270">
    <property type="term" value="F:zinc ion binding"/>
    <property type="evidence" value="ECO:0007669"/>
    <property type="project" value="UniProtKB-UniRule"/>
</dbReference>
<dbReference type="GO" id="GO:0045892">
    <property type="term" value="P:negative regulation of DNA-templated transcription"/>
    <property type="evidence" value="ECO:0007669"/>
    <property type="project" value="UniProtKB-UniRule"/>
</dbReference>
<dbReference type="HAMAP" id="MF_00440">
    <property type="entry name" value="NrdR"/>
    <property type="match status" value="1"/>
</dbReference>
<dbReference type="InterPro" id="IPR005144">
    <property type="entry name" value="ATP-cone_dom"/>
</dbReference>
<dbReference type="InterPro" id="IPR055173">
    <property type="entry name" value="NrdR-like_N"/>
</dbReference>
<dbReference type="InterPro" id="IPR003796">
    <property type="entry name" value="RNR_NrdR-like"/>
</dbReference>
<dbReference type="NCBIfam" id="TIGR00244">
    <property type="entry name" value="transcriptional regulator NrdR"/>
    <property type="match status" value="1"/>
</dbReference>
<dbReference type="PANTHER" id="PTHR30455">
    <property type="entry name" value="TRANSCRIPTIONAL REPRESSOR NRDR"/>
    <property type="match status" value="1"/>
</dbReference>
<dbReference type="PANTHER" id="PTHR30455:SF2">
    <property type="entry name" value="TRANSCRIPTIONAL REPRESSOR NRDR"/>
    <property type="match status" value="1"/>
</dbReference>
<dbReference type="Pfam" id="PF03477">
    <property type="entry name" value="ATP-cone"/>
    <property type="match status" value="1"/>
</dbReference>
<dbReference type="Pfam" id="PF22811">
    <property type="entry name" value="Zn_ribbon_NrdR"/>
    <property type="match status" value="1"/>
</dbReference>
<dbReference type="PROSITE" id="PS51161">
    <property type="entry name" value="ATP_CONE"/>
    <property type="match status" value="1"/>
</dbReference>
<sequence length="152" mass="17400">MQCPFCNHGELKVIDSRNAPEANAIKRRRECLNCGQRFTTFETVELTLQVLKRDGRYENFQESKLINGLNAASSHTRIGQDQVHAIASNVKSELLGKQNREISTKEIGELVMKYLKKADMIAYIRFACVYRRFKDVGELMEVLLSATPDMEK</sequence>
<gene>
    <name evidence="1" type="primary">nrdR</name>
    <name type="ordered locus">CAB207</name>
</gene>
<organism>
    <name type="scientific">Chlamydia abortus (strain DSM 27085 / S26/3)</name>
    <name type="common">Chlamydophila abortus</name>
    <dbReference type="NCBI Taxonomy" id="218497"/>
    <lineage>
        <taxon>Bacteria</taxon>
        <taxon>Pseudomonadati</taxon>
        <taxon>Chlamydiota</taxon>
        <taxon>Chlamydiia</taxon>
        <taxon>Chlamydiales</taxon>
        <taxon>Chlamydiaceae</taxon>
        <taxon>Chlamydia/Chlamydophila group</taxon>
        <taxon>Chlamydia</taxon>
    </lineage>
</organism>
<keyword id="KW-0067">ATP-binding</keyword>
<keyword id="KW-0238">DNA-binding</keyword>
<keyword id="KW-0479">Metal-binding</keyword>
<keyword id="KW-0547">Nucleotide-binding</keyword>
<keyword id="KW-0678">Repressor</keyword>
<keyword id="KW-0804">Transcription</keyword>
<keyword id="KW-0805">Transcription regulation</keyword>
<keyword id="KW-0862">Zinc</keyword>
<keyword id="KW-0863">Zinc-finger</keyword>
<accession>Q5L6Q6</accession>
<protein>
    <recommendedName>
        <fullName evidence="1">Transcriptional repressor NrdR</fullName>
    </recommendedName>
</protein>
<evidence type="ECO:0000255" key="1">
    <source>
        <dbReference type="HAMAP-Rule" id="MF_00440"/>
    </source>
</evidence>
<name>NRDR_CHLAB</name>